<gene>
    <name type="primary">PRXL2C</name>
    <name type="synonym">AAED1</name>
</gene>
<protein>
    <recommendedName>
        <fullName>Peroxiredoxin-like 2C</fullName>
    </recommendedName>
    <alternativeName>
        <fullName>AhpC/TSA antioxidant enzyme domain-containing protein 1</fullName>
    </alternativeName>
    <alternativeName>
        <fullName>Thioredoxin-like protein AAED1</fullName>
    </alternativeName>
</protein>
<keyword id="KW-1185">Reference proteome</keyword>
<comment type="function">
    <text evidence="1">May positively regulate ERK1/2 signaling and AKT1 activation leading to HIF1A up-regulation with an increased expression of glycolysis genes and enhanced glycolysis.</text>
</comment>
<comment type="similarity">
    <text evidence="3">Belongs to the peroxiredoxin-like PRXL2 family. PRXL2C subfamily.</text>
</comment>
<sequence length="228" mass="25137">MAAPSEAPVTRQVSGHAAPAPVPSGPASWQPLAAAVAELPVLDASGRPVLFGELFRERRAIVVFVRHFLCYICKEYVEDLAKIPKSFLQEANVTLIVIGQSSYHHIEPFCKLTGYSHEIYVDPEREIYKRLGMKRGEEIASSGQSPHVKSNILSGSIRSLWRAVTGPLFDFQGDPAQQGGTLILGPGNNIHFIHHDRNRLDHKPINSVLQLVGVQHVDFTSRPSVIHV</sequence>
<reference key="1">
    <citation type="submission" date="2006-06" db="EMBL/GenBank/DDBJ databases">
        <authorList>
            <consortium name="NIH - Mammalian Gene Collection (MGC) project"/>
        </authorList>
    </citation>
    <scope>NUCLEOTIDE SEQUENCE [LARGE SCALE MRNA]</scope>
    <source>
        <strain>Hereford</strain>
        <tissue>Fetal cerebellum</tissue>
    </source>
</reference>
<organism>
    <name type="scientific">Bos taurus</name>
    <name type="common">Bovine</name>
    <dbReference type="NCBI Taxonomy" id="9913"/>
    <lineage>
        <taxon>Eukaryota</taxon>
        <taxon>Metazoa</taxon>
        <taxon>Chordata</taxon>
        <taxon>Craniata</taxon>
        <taxon>Vertebrata</taxon>
        <taxon>Euteleostomi</taxon>
        <taxon>Mammalia</taxon>
        <taxon>Eutheria</taxon>
        <taxon>Laurasiatheria</taxon>
        <taxon>Artiodactyla</taxon>
        <taxon>Ruminantia</taxon>
        <taxon>Pecora</taxon>
        <taxon>Bovidae</taxon>
        <taxon>Bovinae</taxon>
        <taxon>Bos</taxon>
    </lineage>
</organism>
<accession>Q148E0</accession>
<evidence type="ECO:0000250" key="1">
    <source>
        <dbReference type="UniProtKB" id="Q7RTV5"/>
    </source>
</evidence>
<evidence type="ECO:0000256" key="2">
    <source>
        <dbReference type="SAM" id="MobiDB-lite"/>
    </source>
</evidence>
<evidence type="ECO:0000305" key="3"/>
<name>PXL2C_BOVIN</name>
<dbReference type="EMBL" id="BC118425">
    <property type="protein sequence ID" value="AAI18426.1"/>
    <property type="molecule type" value="mRNA"/>
</dbReference>
<dbReference type="RefSeq" id="NP_001069904.1">
    <property type="nucleotide sequence ID" value="NM_001076436.2"/>
</dbReference>
<dbReference type="FunCoup" id="Q148E0">
    <property type="interactions" value="259"/>
</dbReference>
<dbReference type="STRING" id="9913.ENSBTAP00000027653"/>
<dbReference type="PaxDb" id="9913-ENSBTAP00000027653"/>
<dbReference type="GeneID" id="616897"/>
<dbReference type="KEGG" id="bta:616897"/>
<dbReference type="CTD" id="195827"/>
<dbReference type="VEuPathDB" id="HostDB:ENSBTAG00000020749"/>
<dbReference type="eggNOG" id="KOG4498">
    <property type="taxonomic scope" value="Eukaryota"/>
</dbReference>
<dbReference type="HOGENOM" id="CLU_035338_2_0_1"/>
<dbReference type="InParanoid" id="Q148E0"/>
<dbReference type="OMA" id="MQNTVDH"/>
<dbReference type="OrthoDB" id="40334at2759"/>
<dbReference type="TreeFam" id="TF329293"/>
<dbReference type="Proteomes" id="UP000009136">
    <property type="component" value="Chromosome 8"/>
</dbReference>
<dbReference type="Bgee" id="ENSBTAG00000020749">
    <property type="expression patterns" value="Expressed in caput epididymis and 105 other cell types or tissues"/>
</dbReference>
<dbReference type="GO" id="GO:0070374">
    <property type="term" value="P:positive regulation of ERK1 and ERK2 cascade"/>
    <property type="evidence" value="ECO:0000250"/>
    <property type="project" value="UniProtKB"/>
</dbReference>
<dbReference type="GO" id="GO:0045821">
    <property type="term" value="P:positive regulation of glycolytic process"/>
    <property type="evidence" value="ECO:0000250"/>
    <property type="project" value="UniProtKB"/>
</dbReference>
<dbReference type="CDD" id="cd02970">
    <property type="entry name" value="PRX_like2"/>
    <property type="match status" value="1"/>
</dbReference>
<dbReference type="Gene3D" id="3.40.30.10">
    <property type="entry name" value="Glutaredoxin"/>
    <property type="match status" value="1"/>
</dbReference>
<dbReference type="InterPro" id="IPR032801">
    <property type="entry name" value="PXL2A/B/C"/>
</dbReference>
<dbReference type="InterPro" id="IPR036249">
    <property type="entry name" value="Thioredoxin-like_sf"/>
</dbReference>
<dbReference type="PANTHER" id="PTHR28630">
    <property type="match status" value="1"/>
</dbReference>
<dbReference type="PANTHER" id="PTHR28630:SF3">
    <property type="entry name" value="PEROXIREDOXIN-LIKE 2C"/>
    <property type="match status" value="1"/>
</dbReference>
<dbReference type="Pfam" id="PF13911">
    <property type="entry name" value="AhpC-TSA_2"/>
    <property type="match status" value="1"/>
</dbReference>
<dbReference type="SUPFAM" id="SSF52833">
    <property type="entry name" value="Thioredoxin-like"/>
    <property type="match status" value="1"/>
</dbReference>
<proteinExistence type="evidence at transcript level"/>
<feature type="chain" id="PRO_0000249460" description="Peroxiredoxin-like 2C">
    <location>
        <begin position="1"/>
        <end position="228"/>
    </location>
</feature>
<feature type="region of interest" description="Disordered" evidence="2">
    <location>
        <begin position="1"/>
        <end position="22"/>
    </location>
</feature>
<feature type="compositionally biased region" description="Low complexity" evidence="2">
    <location>
        <begin position="13"/>
        <end position="22"/>
    </location>
</feature>